<comment type="similarity">
    <text evidence="1">Belongs to the SfsA family.</text>
</comment>
<protein>
    <recommendedName>
        <fullName evidence="1">Sugar fermentation stimulation protein homolog</fullName>
    </recommendedName>
</protein>
<organism>
    <name type="scientific">Enterococcus mundtii</name>
    <dbReference type="NCBI Taxonomy" id="53346"/>
    <lineage>
        <taxon>Bacteria</taxon>
        <taxon>Bacillati</taxon>
        <taxon>Bacillota</taxon>
        <taxon>Bacilli</taxon>
        <taxon>Lactobacillales</taxon>
        <taxon>Enterococcaceae</taxon>
        <taxon>Enterococcus</taxon>
    </lineage>
</organism>
<name>SFSA_ENTMU</name>
<sequence length="242" mass="27465">MDYQDVEIAYFIERPNRFIAFCLNKKGEVVKTHVKNTGRGKELLLPGAEVALVHIPGTKRKTAYDLIAVKKEQQWFNIDSQLPNRLAIDGILDGTIHLPNLNSDIEFYKREVTFGKSKFDIYLETSCGQKAFVEVKGMTLENKAIGAFPDAPTIRGLKHVNELIGAHQEGYETYILFIAQFEHLHQATIHEQMQPELATAFRFAQQAGVQVIVYNCQVTEKQVVLKQAIPFDLNTVFEDPNL</sequence>
<feature type="chain" id="PRO_0000152285" description="Sugar fermentation stimulation protein homolog">
    <location>
        <begin position="1"/>
        <end position="242"/>
    </location>
</feature>
<proteinExistence type="inferred from homology"/>
<reference key="1">
    <citation type="submission" date="2001-09" db="EMBL/GenBank/DDBJ databases">
        <title>Cloning and analysis of the glucose-6-phosphate 1-dehydrogenase gene from Enterococcus mundtii.</title>
        <authorList>
            <person name="Saavedra L."/>
            <person name="Ruiz Holgado A."/>
            <person name="Sesma F."/>
        </authorList>
    </citation>
    <scope>NUCLEOTIDE SEQUENCE [GENOMIC DNA]</scope>
    <source>
        <strain>CRL10</strain>
    </source>
</reference>
<gene>
    <name evidence="1" type="primary">sfsA</name>
</gene>
<accession>P58430</accession>
<dbReference type="EMBL" id="AF417113">
    <property type="protein sequence ID" value="AAL14617.1"/>
    <property type="molecule type" value="Genomic_DNA"/>
</dbReference>
<dbReference type="RefSeq" id="WP_034689819.1">
    <property type="nucleotide sequence ID" value="NZ_JAYLVI010000005.1"/>
</dbReference>
<dbReference type="SMR" id="P58430"/>
<dbReference type="STRING" id="53346.A5802_000384"/>
<dbReference type="GO" id="GO:0003677">
    <property type="term" value="F:DNA binding"/>
    <property type="evidence" value="ECO:0007669"/>
    <property type="project" value="InterPro"/>
</dbReference>
<dbReference type="CDD" id="cd22359">
    <property type="entry name" value="SfsA-like_bacterial"/>
    <property type="match status" value="1"/>
</dbReference>
<dbReference type="Gene3D" id="2.40.50.580">
    <property type="match status" value="1"/>
</dbReference>
<dbReference type="Gene3D" id="3.40.1350.60">
    <property type="match status" value="1"/>
</dbReference>
<dbReference type="HAMAP" id="MF_00095">
    <property type="entry name" value="SfsA"/>
    <property type="match status" value="1"/>
</dbReference>
<dbReference type="InterPro" id="IPR005224">
    <property type="entry name" value="SfsA"/>
</dbReference>
<dbReference type="InterPro" id="IPR040452">
    <property type="entry name" value="SfsA_C"/>
</dbReference>
<dbReference type="InterPro" id="IPR041465">
    <property type="entry name" value="SfsA_N"/>
</dbReference>
<dbReference type="NCBIfam" id="TIGR00230">
    <property type="entry name" value="sfsA"/>
    <property type="match status" value="1"/>
</dbReference>
<dbReference type="PANTHER" id="PTHR30545">
    <property type="entry name" value="SUGAR FERMENTATION STIMULATION PROTEIN A"/>
    <property type="match status" value="1"/>
</dbReference>
<dbReference type="PANTHER" id="PTHR30545:SF2">
    <property type="entry name" value="SUGAR FERMENTATION STIMULATION PROTEIN A"/>
    <property type="match status" value="1"/>
</dbReference>
<dbReference type="Pfam" id="PF03749">
    <property type="entry name" value="SfsA"/>
    <property type="match status" value="1"/>
</dbReference>
<dbReference type="Pfam" id="PF17746">
    <property type="entry name" value="SfsA_N"/>
    <property type="match status" value="1"/>
</dbReference>
<evidence type="ECO:0000255" key="1">
    <source>
        <dbReference type="HAMAP-Rule" id="MF_00095"/>
    </source>
</evidence>